<keyword id="KW-0997">Cell inner membrane</keyword>
<keyword id="KW-1003">Cell membrane</keyword>
<keyword id="KW-0472">Membrane</keyword>
<keyword id="KW-0520">NAD</keyword>
<keyword id="KW-0874">Quinone</keyword>
<keyword id="KW-1278">Translocase</keyword>
<keyword id="KW-0812">Transmembrane</keyword>
<keyword id="KW-1133">Transmembrane helix</keyword>
<keyword id="KW-0813">Transport</keyword>
<keyword id="KW-0830">Ubiquinone</keyword>
<reference key="1">
    <citation type="submission" date="2006-09" db="EMBL/GenBank/DDBJ databases">
        <title>Complete sequence of Rhodopseudomonas palustris BisA53.</title>
        <authorList>
            <consortium name="US DOE Joint Genome Institute"/>
            <person name="Copeland A."/>
            <person name="Lucas S."/>
            <person name="Lapidus A."/>
            <person name="Barry K."/>
            <person name="Detter J.C."/>
            <person name="Glavina del Rio T."/>
            <person name="Hammon N."/>
            <person name="Israni S."/>
            <person name="Dalin E."/>
            <person name="Tice H."/>
            <person name="Pitluck S."/>
            <person name="Chain P."/>
            <person name="Malfatti S."/>
            <person name="Shin M."/>
            <person name="Vergez L."/>
            <person name="Schmutz J."/>
            <person name="Larimer F."/>
            <person name="Land M."/>
            <person name="Hauser L."/>
            <person name="Pelletier D.A."/>
            <person name="Kyrpides N."/>
            <person name="Kim E."/>
            <person name="Harwood C.S."/>
            <person name="Oda Y."/>
            <person name="Richardson P."/>
        </authorList>
    </citation>
    <scope>NUCLEOTIDE SEQUENCE [LARGE SCALE GENOMIC DNA]</scope>
    <source>
        <strain>BisA53</strain>
    </source>
</reference>
<sequence>MTGAELTGFMILAAGLFAAGVFGVLARRGILFQLIALEVALSGPALAFIAAGAYHGDAEGQGMFVLTLTLAAAEVAVGLALFLRIRRAKGSDDSDAVSGLKG</sequence>
<organism>
    <name type="scientific">Rhodopseudomonas palustris (strain BisA53)</name>
    <dbReference type="NCBI Taxonomy" id="316055"/>
    <lineage>
        <taxon>Bacteria</taxon>
        <taxon>Pseudomonadati</taxon>
        <taxon>Pseudomonadota</taxon>
        <taxon>Alphaproteobacteria</taxon>
        <taxon>Hyphomicrobiales</taxon>
        <taxon>Nitrobacteraceae</taxon>
        <taxon>Rhodopseudomonas</taxon>
    </lineage>
</organism>
<proteinExistence type="inferred from homology"/>
<protein>
    <recommendedName>
        <fullName evidence="1">NADH-quinone oxidoreductase subunit K</fullName>
        <ecNumber evidence="1">7.1.1.-</ecNumber>
    </recommendedName>
    <alternativeName>
        <fullName evidence="1">NADH dehydrogenase I subunit K</fullName>
    </alternativeName>
    <alternativeName>
        <fullName evidence="1">NDH-1 subunit K</fullName>
    </alternativeName>
</protein>
<gene>
    <name evidence="1" type="primary">nuoK</name>
    <name type="ordered locus">RPE_1719</name>
</gene>
<name>NUOK_RHOP5</name>
<feature type="chain" id="PRO_5000133414" description="NADH-quinone oxidoreductase subunit K">
    <location>
        <begin position="1"/>
        <end position="102"/>
    </location>
</feature>
<feature type="transmembrane region" description="Helical" evidence="1">
    <location>
        <begin position="6"/>
        <end position="26"/>
    </location>
</feature>
<feature type="transmembrane region" description="Helical" evidence="1">
    <location>
        <begin position="30"/>
        <end position="50"/>
    </location>
</feature>
<feature type="transmembrane region" description="Helical" evidence="1">
    <location>
        <begin position="63"/>
        <end position="83"/>
    </location>
</feature>
<dbReference type="EC" id="7.1.1.-" evidence="1"/>
<dbReference type="EMBL" id="CP000463">
    <property type="protein sequence ID" value="ABJ05668.1"/>
    <property type="molecule type" value="Genomic_DNA"/>
</dbReference>
<dbReference type="SMR" id="Q07QW6"/>
<dbReference type="STRING" id="316055.RPE_1719"/>
<dbReference type="KEGG" id="rpe:RPE_1719"/>
<dbReference type="eggNOG" id="COG0713">
    <property type="taxonomic scope" value="Bacteria"/>
</dbReference>
<dbReference type="HOGENOM" id="CLU_144724_0_1_5"/>
<dbReference type="OrthoDB" id="9810120at2"/>
<dbReference type="GO" id="GO:0030964">
    <property type="term" value="C:NADH dehydrogenase complex"/>
    <property type="evidence" value="ECO:0007669"/>
    <property type="project" value="TreeGrafter"/>
</dbReference>
<dbReference type="GO" id="GO:0005886">
    <property type="term" value="C:plasma membrane"/>
    <property type="evidence" value="ECO:0007669"/>
    <property type="project" value="UniProtKB-SubCell"/>
</dbReference>
<dbReference type="GO" id="GO:0050136">
    <property type="term" value="F:NADH:ubiquinone reductase (non-electrogenic) activity"/>
    <property type="evidence" value="ECO:0007669"/>
    <property type="project" value="UniProtKB-UniRule"/>
</dbReference>
<dbReference type="GO" id="GO:0048038">
    <property type="term" value="F:quinone binding"/>
    <property type="evidence" value="ECO:0007669"/>
    <property type="project" value="UniProtKB-KW"/>
</dbReference>
<dbReference type="GO" id="GO:0042773">
    <property type="term" value="P:ATP synthesis coupled electron transport"/>
    <property type="evidence" value="ECO:0007669"/>
    <property type="project" value="InterPro"/>
</dbReference>
<dbReference type="Gene3D" id="1.10.287.3510">
    <property type="match status" value="1"/>
</dbReference>
<dbReference type="HAMAP" id="MF_01456">
    <property type="entry name" value="NDH1_NuoK"/>
    <property type="match status" value="1"/>
</dbReference>
<dbReference type="InterPro" id="IPR001133">
    <property type="entry name" value="NADH_UbQ_OxRdtase_chain4L/K"/>
</dbReference>
<dbReference type="InterPro" id="IPR039428">
    <property type="entry name" value="NUOK/Mnh_C1-like"/>
</dbReference>
<dbReference type="NCBIfam" id="NF004320">
    <property type="entry name" value="PRK05715.1-2"/>
    <property type="match status" value="1"/>
</dbReference>
<dbReference type="PANTHER" id="PTHR11434:SF16">
    <property type="entry name" value="NADH-UBIQUINONE OXIDOREDUCTASE CHAIN 4L"/>
    <property type="match status" value="1"/>
</dbReference>
<dbReference type="PANTHER" id="PTHR11434">
    <property type="entry name" value="NADH-UBIQUINONE OXIDOREDUCTASE SUBUNIT ND4L"/>
    <property type="match status" value="1"/>
</dbReference>
<dbReference type="Pfam" id="PF00420">
    <property type="entry name" value="Oxidored_q2"/>
    <property type="match status" value="1"/>
</dbReference>
<accession>Q07QW6</accession>
<comment type="function">
    <text evidence="1">NDH-1 shuttles electrons from NADH, via FMN and iron-sulfur (Fe-S) centers, to quinones in the respiratory chain. The immediate electron acceptor for the enzyme in this species is believed to be ubiquinone. Couples the redox reaction to proton translocation (for every two electrons transferred, four hydrogen ions are translocated across the cytoplasmic membrane), and thus conserves the redox energy in a proton gradient.</text>
</comment>
<comment type="catalytic activity">
    <reaction evidence="1">
        <text>a quinone + NADH + 5 H(+)(in) = a quinol + NAD(+) + 4 H(+)(out)</text>
        <dbReference type="Rhea" id="RHEA:57888"/>
        <dbReference type="ChEBI" id="CHEBI:15378"/>
        <dbReference type="ChEBI" id="CHEBI:24646"/>
        <dbReference type="ChEBI" id="CHEBI:57540"/>
        <dbReference type="ChEBI" id="CHEBI:57945"/>
        <dbReference type="ChEBI" id="CHEBI:132124"/>
    </reaction>
</comment>
<comment type="subunit">
    <text evidence="1">NDH-1 is composed of 14 different subunits. Subunits NuoA, H, J, K, L, M, N constitute the membrane sector of the complex.</text>
</comment>
<comment type="subcellular location">
    <subcellularLocation>
        <location evidence="1">Cell inner membrane</location>
        <topology evidence="1">Multi-pass membrane protein</topology>
    </subcellularLocation>
</comment>
<comment type="similarity">
    <text evidence="1">Belongs to the complex I subunit 4L family.</text>
</comment>
<evidence type="ECO:0000255" key="1">
    <source>
        <dbReference type="HAMAP-Rule" id="MF_01456"/>
    </source>
</evidence>